<reference key="1">
    <citation type="journal article" date="2008" name="Proc. Natl. Acad. Sci. U.S.A.">
        <title>Nitrogen fixation island and rhizosphere competence traits in the genome of root-associated Pseudomonas stutzeri A1501.</title>
        <authorList>
            <person name="Yan Y."/>
            <person name="Yang J."/>
            <person name="Dou Y."/>
            <person name="Chen M."/>
            <person name="Ping S."/>
            <person name="Peng J."/>
            <person name="Lu W."/>
            <person name="Zhang W."/>
            <person name="Yao Z."/>
            <person name="Li H."/>
            <person name="Liu W."/>
            <person name="He S."/>
            <person name="Geng L."/>
            <person name="Zhang X."/>
            <person name="Yang F."/>
            <person name="Yu H."/>
            <person name="Zhan Y."/>
            <person name="Li D."/>
            <person name="Lin Z."/>
            <person name="Wang Y."/>
            <person name="Elmerich C."/>
            <person name="Lin M."/>
            <person name="Jin Q."/>
        </authorList>
    </citation>
    <scope>NUCLEOTIDE SEQUENCE [LARGE SCALE GENOMIC DNA]</scope>
    <source>
        <strain>A1501</strain>
    </source>
</reference>
<evidence type="ECO:0000255" key="1">
    <source>
        <dbReference type="HAMAP-Rule" id="MF_00595"/>
    </source>
</evidence>
<keyword id="KW-0120">Carbon dioxide fixation</keyword>
<keyword id="KW-0456">Lyase</keyword>
<keyword id="KW-0460">Magnesium</keyword>
<keyword id="KW-1185">Reference proteome</keyword>
<protein>
    <recommendedName>
        <fullName evidence="1">Phosphoenolpyruvate carboxylase</fullName>
        <shortName evidence="1">PEPC</shortName>
        <shortName evidence="1">PEPCase</shortName>
        <ecNumber evidence="1">4.1.1.31</ecNumber>
    </recommendedName>
</protein>
<accession>A4VN44</accession>
<sequence length="879" mass="97821">MAKIIDARLRDNVHLLGELLGNTIRAQHGDQFFDKIERIRKGAKAARKGSAEGAQLLAETLDSLDESELLPMTRAFNQFLNLANIAEQYHQVRRRAAGEPAPFEIGVFADLIERLKAAGHDNEFIARQVSRLEIELVLTAHPTEVSRRTLIQKYDAIAQQLAARDHTDLSDAERASIELSLQRLIAEVWHTEEIRRNRPTPVEEAKWGFAAIENSLWKAVPNVLRQTDATLHRLTGLHLPLEAAPIRFASWMGGDRDGNPNVTAMVSREVLLTARWVAADLYLREIEGLITALSMREASDELLRQSGDSAEPYRVLLKPLRQRLRATREWARAAIEHGQPAPAEVLQDCAELRRPLELCYRSLHACGMGVIADGALLDCLRRLAVFGLFLVRLDIRQDAARHAAALAEITDYLGLGDYQQWDEQKRLDWLQHELANRRPLLPAHYHPSADTAEVLATCAVIAEAPAASLGSYVISMAHAASDVLAVQLLLKEAGLQRPMRVVPLFETLDDLNNAAPTIDRLLSLPGYRQRLHGPQEVMIGYSDSAKDAGTTAAAWAQYRAQEQLVEVCREHGVELLLFHGRGGTVGRGGGPAHAAILSQPPGSVAGRFRTTEQGEMIRFKFGLPDIAEQNLNLYLAAVLEATLLPPPPPEPGWRETMDRLAAEGVAAYRGVVREHPLFVDYFRQATPELELGRLPLGSRPAKRREGGVESLRAIPWIFAWTQTRLMLPAWLGWEQALHGALQRGEGERLAEMRARWPFFSTRIDMLEMVLAKADADIARRYDERLVQPELLSLGSDLRDRLSQVIEAVLSLTGQSDLLDHSPKTQEAFSLRNTYLDPLHLMQIELLARSRQRQGPAESPLEQALLVSVAGIAAGLRNTG</sequence>
<name>CAPP_STUS1</name>
<gene>
    <name evidence="1" type="primary">ppc</name>
    <name type="ordered locus">PST_2745</name>
</gene>
<organism>
    <name type="scientific">Stutzerimonas stutzeri (strain A1501)</name>
    <name type="common">Pseudomonas stutzeri</name>
    <dbReference type="NCBI Taxonomy" id="379731"/>
    <lineage>
        <taxon>Bacteria</taxon>
        <taxon>Pseudomonadati</taxon>
        <taxon>Pseudomonadota</taxon>
        <taxon>Gammaproteobacteria</taxon>
        <taxon>Pseudomonadales</taxon>
        <taxon>Pseudomonadaceae</taxon>
        <taxon>Stutzerimonas</taxon>
    </lineage>
</organism>
<feature type="chain" id="PRO_1000072624" description="Phosphoenolpyruvate carboxylase">
    <location>
        <begin position="1"/>
        <end position="879"/>
    </location>
</feature>
<feature type="active site" evidence="1">
    <location>
        <position position="141"/>
    </location>
</feature>
<feature type="active site" evidence="1">
    <location>
        <position position="546"/>
    </location>
</feature>
<dbReference type="EC" id="4.1.1.31" evidence="1"/>
<dbReference type="EMBL" id="CP000304">
    <property type="protein sequence ID" value="ABP80395.1"/>
    <property type="molecule type" value="Genomic_DNA"/>
</dbReference>
<dbReference type="RefSeq" id="WP_011913852.1">
    <property type="nucleotide sequence ID" value="NC_009434.1"/>
</dbReference>
<dbReference type="SMR" id="A4VN44"/>
<dbReference type="KEGG" id="psa:PST_2745"/>
<dbReference type="eggNOG" id="COG2352">
    <property type="taxonomic scope" value="Bacteria"/>
</dbReference>
<dbReference type="HOGENOM" id="CLU_006557_2_0_6"/>
<dbReference type="Proteomes" id="UP000000233">
    <property type="component" value="Chromosome"/>
</dbReference>
<dbReference type="GO" id="GO:0005829">
    <property type="term" value="C:cytosol"/>
    <property type="evidence" value="ECO:0007669"/>
    <property type="project" value="TreeGrafter"/>
</dbReference>
<dbReference type="GO" id="GO:0000287">
    <property type="term" value="F:magnesium ion binding"/>
    <property type="evidence" value="ECO:0007669"/>
    <property type="project" value="UniProtKB-UniRule"/>
</dbReference>
<dbReference type="GO" id="GO:0008964">
    <property type="term" value="F:phosphoenolpyruvate carboxylase activity"/>
    <property type="evidence" value="ECO:0007669"/>
    <property type="project" value="UniProtKB-UniRule"/>
</dbReference>
<dbReference type="GO" id="GO:0015977">
    <property type="term" value="P:carbon fixation"/>
    <property type="evidence" value="ECO:0007669"/>
    <property type="project" value="UniProtKB-UniRule"/>
</dbReference>
<dbReference type="GO" id="GO:0006107">
    <property type="term" value="P:oxaloacetate metabolic process"/>
    <property type="evidence" value="ECO:0007669"/>
    <property type="project" value="UniProtKB-UniRule"/>
</dbReference>
<dbReference type="GO" id="GO:0006099">
    <property type="term" value="P:tricarboxylic acid cycle"/>
    <property type="evidence" value="ECO:0007669"/>
    <property type="project" value="InterPro"/>
</dbReference>
<dbReference type="Gene3D" id="1.20.1440.90">
    <property type="entry name" value="Phosphoenolpyruvate/pyruvate domain"/>
    <property type="match status" value="1"/>
</dbReference>
<dbReference type="HAMAP" id="MF_00595">
    <property type="entry name" value="PEPcase_type1"/>
    <property type="match status" value="1"/>
</dbReference>
<dbReference type="InterPro" id="IPR021135">
    <property type="entry name" value="PEP_COase"/>
</dbReference>
<dbReference type="InterPro" id="IPR022805">
    <property type="entry name" value="PEP_COase_bac/pln-type"/>
</dbReference>
<dbReference type="InterPro" id="IPR018129">
    <property type="entry name" value="PEP_COase_Lys_AS"/>
</dbReference>
<dbReference type="InterPro" id="IPR033129">
    <property type="entry name" value="PEPCASE_His_AS"/>
</dbReference>
<dbReference type="InterPro" id="IPR015813">
    <property type="entry name" value="Pyrv/PenolPyrv_kinase-like_dom"/>
</dbReference>
<dbReference type="NCBIfam" id="NF000584">
    <property type="entry name" value="PRK00009.1"/>
    <property type="match status" value="1"/>
</dbReference>
<dbReference type="PANTHER" id="PTHR30523">
    <property type="entry name" value="PHOSPHOENOLPYRUVATE CARBOXYLASE"/>
    <property type="match status" value="1"/>
</dbReference>
<dbReference type="PANTHER" id="PTHR30523:SF6">
    <property type="entry name" value="PHOSPHOENOLPYRUVATE CARBOXYLASE"/>
    <property type="match status" value="1"/>
</dbReference>
<dbReference type="Pfam" id="PF00311">
    <property type="entry name" value="PEPcase"/>
    <property type="match status" value="1"/>
</dbReference>
<dbReference type="PRINTS" id="PR00150">
    <property type="entry name" value="PEPCARBXLASE"/>
</dbReference>
<dbReference type="SUPFAM" id="SSF51621">
    <property type="entry name" value="Phosphoenolpyruvate/pyruvate domain"/>
    <property type="match status" value="1"/>
</dbReference>
<dbReference type="PROSITE" id="PS00781">
    <property type="entry name" value="PEPCASE_1"/>
    <property type="match status" value="1"/>
</dbReference>
<dbReference type="PROSITE" id="PS00393">
    <property type="entry name" value="PEPCASE_2"/>
    <property type="match status" value="1"/>
</dbReference>
<comment type="function">
    <text evidence="1">Forms oxaloacetate, a four-carbon dicarboxylic acid source for the tricarboxylic acid cycle.</text>
</comment>
<comment type="catalytic activity">
    <reaction evidence="1">
        <text>oxaloacetate + phosphate = phosphoenolpyruvate + hydrogencarbonate</text>
        <dbReference type="Rhea" id="RHEA:28370"/>
        <dbReference type="ChEBI" id="CHEBI:16452"/>
        <dbReference type="ChEBI" id="CHEBI:17544"/>
        <dbReference type="ChEBI" id="CHEBI:43474"/>
        <dbReference type="ChEBI" id="CHEBI:58702"/>
        <dbReference type="EC" id="4.1.1.31"/>
    </reaction>
</comment>
<comment type="cofactor">
    <cofactor evidence="1">
        <name>Mg(2+)</name>
        <dbReference type="ChEBI" id="CHEBI:18420"/>
    </cofactor>
</comment>
<comment type="similarity">
    <text evidence="1">Belongs to the PEPCase type 1 family.</text>
</comment>
<proteinExistence type="inferred from homology"/>